<keyword id="KW-0067">ATP-binding</keyword>
<keyword id="KW-0436">Ligase</keyword>
<keyword id="KW-0547">Nucleotide-binding</keyword>
<keyword id="KW-0648">Protein biosynthesis</keyword>
<keyword id="KW-1185">Reference proteome</keyword>
<evidence type="ECO:0000255" key="1">
    <source>
        <dbReference type="HAMAP-Rule" id="MF_00120"/>
    </source>
</evidence>
<sequence length="454" mass="49515">MVTLEEALKFSKEEIINLKKELNQKAKEQKHLGAYVEQFLDKDLSESGDGVPVAIKDNISVKDWELTCASKILQGYVAPYDASVITNLRKNNLSPFGRCNMDEFAMGSTSATSFYGKTLNPHDNTKVPGGSSGGSAAAVASGLAIASLGSDTGGSVRQPAAFCGCVGFKPSYGRVSRYGLAAYSSSLDQIGVLTQNVKDAAILYDVIAGYDEKDSTSANIAFEPTAPKLNANKKLKIAVIKNYIDQTNDDVKQALLKTIDMLKANGYEIVYKDLMDSTFDVAAYYIIAAAEASANLSRYDGVRYGRRSEKCDNLSQMYINSRSEGFGEEVKRRILLGTFVLSSGYYDAYYIKAQKARRFIKQKYEEILNDCDLIFMPVAPSVAFGFNDVKTPIQMYLEDVFTISVNLAGLGGISVPVGKNENGLNISAQLICKAYDEQTLLDGALSLEEIIKNK</sequence>
<reference key="1">
    <citation type="journal article" date="2008" name="Foodborne Pathog. Dis.">
        <title>The complete genome sequence and analysis of the human pathogen Campylobacter lari.</title>
        <authorList>
            <person name="Miller W.G."/>
            <person name="Wang G."/>
            <person name="Binnewies T.T."/>
            <person name="Parker C.T."/>
        </authorList>
    </citation>
    <scope>NUCLEOTIDE SEQUENCE [LARGE SCALE GENOMIC DNA]</scope>
    <source>
        <strain>RM2100 / D67 / ATCC BAA-1060</strain>
    </source>
</reference>
<feature type="chain" id="PRO_1000122470" description="Glutamyl-tRNA(Gln) amidotransferase subunit A">
    <location>
        <begin position="1"/>
        <end position="454"/>
    </location>
</feature>
<feature type="active site" description="Charge relay system" evidence="1">
    <location>
        <position position="56"/>
    </location>
</feature>
<feature type="active site" description="Charge relay system" evidence="1">
    <location>
        <position position="131"/>
    </location>
</feature>
<feature type="active site" description="Acyl-ester intermediate" evidence="1">
    <location>
        <position position="155"/>
    </location>
</feature>
<organism>
    <name type="scientific">Campylobacter lari (strain RM2100 / D67 / ATCC BAA-1060)</name>
    <dbReference type="NCBI Taxonomy" id="306263"/>
    <lineage>
        <taxon>Bacteria</taxon>
        <taxon>Pseudomonadati</taxon>
        <taxon>Campylobacterota</taxon>
        <taxon>Epsilonproteobacteria</taxon>
        <taxon>Campylobacterales</taxon>
        <taxon>Campylobacteraceae</taxon>
        <taxon>Campylobacter</taxon>
    </lineage>
</organism>
<protein>
    <recommendedName>
        <fullName evidence="1">Glutamyl-tRNA(Gln) amidotransferase subunit A</fullName>
        <shortName evidence="1">Glu-ADT subunit A</shortName>
        <ecNumber evidence="1">6.3.5.7</ecNumber>
    </recommendedName>
</protein>
<dbReference type="EC" id="6.3.5.7" evidence="1"/>
<dbReference type="EMBL" id="CP000932">
    <property type="protein sequence ID" value="ACM64482.1"/>
    <property type="molecule type" value="Genomic_DNA"/>
</dbReference>
<dbReference type="RefSeq" id="WP_012661865.1">
    <property type="nucleotide sequence ID" value="NC_012039.1"/>
</dbReference>
<dbReference type="SMR" id="B9KD43"/>
<dbReference type="STRING" id="306263.Cla_1160"/>
<dbReference type="KEGG" id="cla:CLA_1160"/>
<dbReference type="PATRIC" id="fig|306263.5.peg.1147"/>
<dbReference type="eggNOG" id="COG0154">
    <property type="taxonomic scope" value="Bacteria"/>
</dbReference>
<dbReference type="HOGENOM" id="CLU_009600_0_3_7"/>
<dbReference type="Proteomes" id="UP000007727">
    <property type="component" value="Chromosome"/>
</dbReference>
<dbReference type="GO" id="GO:0030956">
    <property type="term" value="C:glutamyl-tRNA(Gln) amidotransferase complex"/>
    <property type="evidence" value="ECO:0007669"/>
    <property type="project" value="InterPro"/>
</dbReference>
<dbReference type="GO" id="GO:0005524">
    <property type="term" value="F:ATP binding"/>
    <property type="evidence" value="ECO:0007669"/>
    <property type="project" value="UniProtKB-KW"/>
</dbReference>
<dbReference type="GO" id="GO:0050567">
    <property type="term" value="F:glutaminyl-tRNA synthase (glutamine-hydrolyzing) activity"/>
    <property type="evidence" value="ECO:0007669"/>
    <property type="project" value="UniProtKB-UniRule"/>
</dbReference>
<dbReference type="GO" id="GO:0006412">
    <property type="term" value="P:translation"/>
    <property type="evidence" value="ECO:0007669"/>
    <property type="project" value="UniProtKB-UniRule"/>
</dbReference>
<dbReference type="Gene3D" id="3.90.1300.10">
    <property type="entry name" value="Amidase signature (AS) domain"/>
    <property type="match status" value="1"/>
</dbReference>
<dbReference type="HAMAP" id="MF_00120">
    <property type="entry name" value="GatA"/>
    <property type="match status" value="1"/>
</dbReference>
<dbReference type="InterPro" id="IPR000120">
    <property type="entry name" value="Amidase"/>
</dbReference>
<dbReference type="InterPro" id="IPR020556">
    <property type="entry name" value="Amidase_CS"/>
</dbReference>
<dbReference type="InterPro" id="IPR023631">
    <property type="entry name" value="Amidase_dom"/>
</dbReference>
<dbReference type="InterPro" id="IPR036928">
    <property type="entry name" value="AS_sf"/>
</dbReference>
<dbReference type="InterPro" id="IPR004412">
    <property type="entry name" value="GatA"/>
</dbReference>
<dbReference type="NCBIfam" id="TIGR00132">
    <property type="entry name" value="gatA"/>
    <property type="match status" value="1"/>
</dbReference>
<dbReference type="PANTHER" id="PTHR11895:SF151">
    <property type="entry name" value="GLUTAMYL-TRNA(GLN) AMIDOTRANSFERASE SUBUNIT A"/>
    <property type="match status" value="1"/>
</dbReference>
<dbReference type="PANTHER" id="PTHR11895">
    <property type="entry name" value="TRANSAMIDASE"/>
    <property type="match status" value="1"/>
</dbReference>
<dbReference type="Pfam" id="PF01425">
    <property type="entry name" value="Amidase"/>
    <property type="match status" value="1"/>
</dbReference>
<dbReference type="SUPFAM" id="SSF75304">
    <property type="entry name" value="Amidase signature (AS) enzymes"/>
    <property type="match status" value="1"/>
</dbReference>
<dbReference type="PROSITE" id="PS00571">
    <property type="entry name" value="AMIDASES"/>
    <property type="match status" value="1"/>
</dbReference>
<name>GATA_CAMLR</name>
<proteinExistence type="inferred from homology"/>
<comment type="function">
    <text evidence="1">Allows the formation of correctly charged Gln-tRNA(Gln) through the transamidation of misacylated Glu-tRNA(Gln) in organisms which lack glutaminyl-tRNA synthetase. The reaction takes place in the presence of glutamine and ATP through an activated gamma-phospho-Glu-tRNA(Gln).</text>
</comment>
<comment type="catalytic activity">
    <reaction evidence="1">
        <text>L-glutamyl-tRNA(Gln) + L-glutamine + ATP + H2O = L-glutaminyl-tRNA(Gln) + L-glutamate + ADP + phosphate + H(+)</text>
        <dbReference type="Rhea" id="RHEA:17521"/>
        <dbReference type="Rhea" id="RHEA-COMP:9681"/>
        <dbReference type="Rhea" id="RHEA-COMP:9684"/>
        <dbReference type="ChEBI" id="CHEBI:15377"/>
        <dbReference type="ChEBI" id="CHEBI:15378"/>
        <dbReference type="ChEBI" id="CHEBI:29985"/>
        <dbReference type="ChEBI" id="CHEBI:30616"/>
        <dbReference type="ChEBI" id="CHEBI:43474"/>
        <dbReference type="ChEBI" id="CHEBI:58359"/>
        <dbReference type="ChEBI" id="CHEBI:78520"/>
        <dbReference type="ChEBI" id="CHEBI:78521"/>
        <dbReference type="ChEBI" id="CHEBI:456216"/>
        <dbReference type="EC" id="6.3.5.7"/>
    </reaction>
</comment>
<comment type="subunit">
    <text evidence="1">Heterotrimer of A, B and C subunits.</text>
</comment>
<comment type="similarity">
    <text evidence="1">Belongs to the amidase family. GatA subfamily.</text>
</comment>
<accession>B9KD43</accession>
<gene>
    <name evidence="1" type="primary">gatA</name>
    <name type="ordered locus">Cla_1160</name>
</gene>